<comment type="function">
    <text evidence="1">Required for the assembly and/or stability of the 40S ribosomal subunit. Required for the processing of the 20S rRNA-precursor to mature 18S rRNA in a late step of the maturation of 40S ribosomal subunits. Required during oogenesis and imaginal development.</text>
</comment>
<comment type="subunit">
    <text evidence="1">Component of the small ribosomal subunit. Mature ribosomes consist of a small (40S) and a large (60S) subunit. The 40S subunit contains about 33 different proteins and 1 molecule of RNA (18S). The 60S subunit contains about 49 different proteins and 3 molecules of RNA (28S, 5.8S and 5S). Interacts with oho23B/rpS21.</text>
</comment>
<comment type="subcellular location">
    <subcellularLocation>
        <location evidence="1">Cytoplasm</location>
    </subcellularLocation>
    <subcellularLocation>
        <location evidence="1">Nucleus</location>
    </subcellularLocation>
    <text evidence="1">May associate with nascent RNP complexes within the nucleus.</text>
</comment>
<comment type="similarity">
    <text evidence="1">Belongs to the universal ribosomal protein uS2 family.</text>
</comment>
<sequence>MSGGLDILSLKEDDITKMLVATTHLGSENVNFQMEQYVFKRRADGVNIINLGKTWEKLVLAARAIVAIENASDVFVISSRPIGQRAVLKFAKYTDTTPIAGRFTPGAFTNQIQPAFREPRLLVVTDPNTDHQPIMEASYVNIPVIAFTNTDSPLRYIDIAIPCNNKSPHSIGLMWWLLAREVLRLRGTISRTTEWPVVVDLFFYRDPEEAEKEEAAAAKELLPPPKIEEAVDHPVEETTNWADEVAAETVGGVEDWNEDTVKTSWGSDGQF</sequence>
<accession>B4MB32</accession>
<evidence type="ECO:0000255" key="1">
    <source>
        <dbReference type="HAMAP-Rule" id="MF_03015"/>
    </source>
</evidence>
<evidence type="ECO:0000256" key="2">
    <source>
        <dbReference type="SAM" id="MobiDB-lite"/>
    </source>
</evidence>
<evidence type="ECO:0000305" key="3"/>
<organism>
    <name type="scientific">Drosophila virilis</name>
    <name type="common">Fruit fly</name>
    <dbReference type="NCBI Taxonomy" id="7244"/>
    <lineage>
        <taxon>Eukaryota</taxon>
        <taxon>Metazoa</taxon>
        <taxon>Ecdysozoa</taxon>
        <taxon>Arthropoda</taxon>
        <taxon>Hexapoda</taxon>
        <taxon>Insecta</taxon>
        <taxon>Pterygota</taxon>
        <taxon>Neoptera</taxon>
        <taxon>Endopterygota</taxon>
        <taxon>Diptera</taxon>
        <taxon>Brachycera</taxon>
        <taxon>Muscomorpha</taxon>
        <taxon>Ephydroidea</taxon>
        <taxon>Drosophilidae</taxon>
        <taxon>Drosophila</taxon>
    </lineage>
</organism>
<reference key="1">
    <citation type="journal article" date="2007" name="Nature">
        <title>Evolution of genes and genomes on the Drosophila phylogeny.</title>
        <authorList>
            <consortium name="Drosophila 12 genomes consortium"/>
        </authorList>
    </citation>
    <scope>NUCLEOTIDE SEQUENCE [LARGE SCALE GENOMIC DNA]</scope>
    <source>
        <strain>Tucson 15010-1051.87</strain>
    </source>
</reference>
<keyword id="KW-0963">Cytoplasm</keyword>
<keyword id="KW-0217">Developmental protein</keyword>
<keyword id="KW-0539">Nucleus</keyword>
<keyword id="KW-1185">Reference proteome</keyword>
<keyword id="KW-0687">Ribonucleoprotein</keyword>
<keyword id="KW-0689">Ribosomal protein</keyword>
<dbReference type="EMBL" id="CH940655">
    <property type="protein sequence ID" value="EDW66441.1"/>
    <property type="molecule type" value="Genomic_DNA"/>
</dbReference>
<dbReference type="RefSeq" id="XP_002058333.1">
    <property type="nucleotide sequence ID" value="XM_002058297.4"/>
</dbReference>
<dbReference type="SMR" id="B4MB32"/>
<dbReference type="FunCoup" id="B4MB32">
    <property type="interactions" value="1287"/>
</dbReference>
<dbReference type="STRING" id="7244.B4MB32"/>
<dbReference type="EnsemblMetazoa" id="FBtr0231474">
    <property type="protein sequence ID" value="FBpp0229966"/>
    <property type="gene ID" value="FBgn0202742"/>
</dbReference>
<dbReference type="EnsemblMetazoa" id="XM_002058297.3">
    <property type="protein sequence ID" value="XP_002058333.1"/>
    <property type="gene ID" value="LOC6634734"/>
</dbReference>
<dbReference type="GeneID" id="6634734"/>
<dbReference type="KEGG" id="dvi:6634734"/>
<dbReference type="CTD" id="104044"/>
<dbReference type="eggNOG" id="KOG0830">
    <property type="taxonomic scope" value="Eukaryota"/>
</dbReference>
<dbReference type="HOGENOM" id="CLU_058171_1_0_1"/>
<dbReference type="InParanoid" id="B4MB32"/>
<dbReference type="OMA" id="VKNFFEP"/>
<dbReference type="OrthoDB" id="414863at2759"/>
<dbReference type="PhylomeDB" id="B4MB32"/>
<dbReference type="ChiTaRS" id="sta">
    <property type="organism name" value="fly"/>
</dbReference>
<dbReference type="Proteomes" id="UP000008792">
    <property type="component" value="Unassembled WGS sequence"/>
</dbReference>
<dbReference type="GO" id="GO:0022627">
    <property type="term" value="C:cytosolic small ribosomal subunit"/>
    <property type="evidence" value="ECO:0007669"/>
    <property type="project" value="UniProtKB-UniRule"/>
</dbReference>
<dbReference type="GO" id="GO:0005634">
    <property type="term" value="C:nucleus"/>
    <property type="evidence" value="ECO:0007669"/>
    <property type="project" value="UniProtKB-SubCell"/>
</dbReference>
<dbReference type="GO" id="GO:0003735">
    <property type="term" value="F:structural constituent of ribosome"/>
    <property type="evidence" value="ECO:0007669"/>
    <property type="project" value="UniProtKB-UniRule"/>
</dbReference>
<dbReference type="GO" id="GO:0000028">
    <property type="term" value="P:ribosomal small subunit assembly"/>
    <property type="evidence" value="ECO:0007669"/>
    <property type="project" value="UniProtKB-UniRule"/>
</dbReference>
<dbReference type="GO" id="GO:0006412">
    <property type="term" value="P:translation"/>
    <property type="evidence" value="ECO:0007669"/>
    <property type="project" value="UniProtKB-UniRule"/>
</dbReference>
<dbReference type="CDD" id="cd01425">
    <property type="entry name" value="RPS2"/>
    <property type="match status" value="1"/>
</dbReference>
<dbReference type="FunFam" id="3.40.50.10490:FF:000012">
    <property type="entry name" value="40S ribosomal protein SA"/>
    <property type="match status" value="1"/>
</dbReference>
<dbReference type="Gene3D" id="3.40.50.10490">
    <property type="entry name" value="Glucose-6-phosphate isomerase like protein, domain 1"/>
    <property type="match status" value="1"/>
</dbReference>
<dbReference type="HAMAP" id="MF_03015">
    <property type="entry name" value="Ribosomal_S2_euk"/>
    <property type="match status" value="1"/>
</dbReference>
<dbReference type="InterPro" id="IPR001865">
    <property type="entry name" value="Ribosomal_uS2"/>
</dbReference>
<dbReference type="InterPro" id="IPR032281">
    <property type="entry name" value="Ribosomal_uS2_C"/>
</dbReference>
<dbReference type="InterPro" id="IPR018130">
    <property type="entry name" value="Ribosomal_uS2_CS"/>
</dbReference>
<dbReference type="InterPro" id="IPR027498">
    <property type="entry name" value="Ribosomal_uS2_euk"/>
</dbReference>
<dbReference type="InterPro" id="IPR005707">
    <property type="entry name" value="Ribosomal_uS2_euk/arc"/>
</dbReference>
<dbReference type="InterPro" id="IPR023591">
    <property type="entry name" value="Ribosomal_uS2_flav_dom_sf"/>
</dbReference>
<dbReference type="NCBIfam" id="TIGR01012">
    <property type="entry name" value="uS2_euk_arch"/>
    <property type="match status" value="1"/>
</dbReference>
<dbReference type="PANTHER" id="PTHR11489">
    <property type="entry name" value="40S RIBOSOMAL PROTEIN SA"/>
    <property type="match status" value="1"/>
</dbReference>
<dbReference type="Pfam" id="PF16122">
    <property type="entry name" value="40S_SA_C"/>
    <property type="match status" value="1"/>
</dbReference>
<dbReference type="Pfam" id="PF00318">
    <property type="entry name" value="Ribosomal_S2"/>
    <property type="match status" value="2"/>
</dbReference>
<dbReference type="PRINTS" id="PR00395">
    <property type="entry name" value="RIBOSOMALS2"/>
</dbReference>
<dbReference type="SUPFAM" id="SSF52313">
    <property type="entry name" value="Ribosomal protein S2"/>
    <property type="match status" value="1"/>
</dbReference>
<dbReference type="PROSITE" id="PS00962">
    <property type="entry name" value="RIBOSOMAL_S2_1"/>
    <property type="match status" value="1"/>
</dbReference>
<dbReference type="PROSITE" id="PS00963">
    <property type="entry name" value="RIBOSOMAL_S2_2"/>
    <property type="match status" value="1"/>
</dbReference>
<feature type="initiator methionine" description="Removed" evidence="1">
    <location>
        <position position="1"/>
    </location>
</feature>
<feature type="chain" id="PRO_0000371589" description="Small ribosomal subunit protein uS2">
    <location>
        <begin position="2"/>
        <end position="271"/>
    </location>
</feature>
<feature type="region of interest" description="Disordered" evidence="2">
    <location>
        <begin position="249"/>
        <end position="271"/>
    </location>
</feature>
<feature type="compositionally biased region" description="Polar residues" evidence="2">
    <location>
        <begin position="262"/>
        <end position="271"/>
    </location>
</feature>
<protein>
    <recommendedName>
        <fullName evidence="1">Small ribosomal subunit protein uS2</fullName>
    </recommendedName>
    <alternativeName>
        <fullName evidence="3">40S ribosomal protein SA</fullName>
    </alternativeName>
    <alternativeName>
        <fullName evidence="1">Protein stubarista</fullName>
    </alternativeName>
</protein>
<gene>
    <name evidence="1" type="primary">sta</name>
    <name type="ORF">GJ15549</name>
</gene>
<proteinExistence type="inferred from homology"/>
<name>RSSA_DROVI</name>